<keyword id="KW-0963">Cytoplasm</keyword>
<keyword id="KW-0328">Glycosyltransferase</keyword>
<keyword id="KW-0660">Purine salvage</keyword>
<keyword id="KW-0808">Transferase</keyword>
<gene>
    <name evidence="1" type="primary">apt</name>
    <name type="ordered locus">VS_0914</name>
</gene>
<accession>B7VL95</accession>
<comment type="function">
    <text evidence="1">Catalyzes a salvage reaction resulting in the formation of AMP, that is energically less costly than de novo synthesis.</text>
</comment>
<comment type="catalytic activity">
    <reaction evidence="1">
        <text>AMP + diphosphate = 5-phospho-alpha-D-ribose 1-diphosphate + adenine</text>
        <dbReference type="Rhea" id="RHEA:16609"/>
        <dbReference type="ChEBI" id="CHEBI:16708"/>
        <dbReference type="ChEBI" id="CHEBI:33019"/>
        <dbReference type="ChEBI" id="CHEBI:58017"/>
        <dbReference type="ChEBI" id="CHEBI:456215"/>
        <dbReference type="EC" id="2.4.2.7"/>
    </reaction>
</comment>
<comment type="pathway">
    <text evidence="1">Purine metabolism; AMP biosynthesis via salvage pathway; AMP from adenine: step 1/1.</text>
</comment>
<comment type="subunit">
    <text evidence="1">Homodimer.</text>
</comment>
<comment type="subcellular location">
    <subcellularLocation>
        <location evidence="1">Cytoplasm</location>
    </subcellularLocation>
</comment>
<comment type="similarity">
    <text evidence="1">Belongs to the purine/pyrimidine phosphoribosyltransferase family.</text>
</comment>
<evidence type="ECO:0000255" key="1">
    <source>
        <dbReference type="HAMAP-Rule" id="MF_00004"/>
    </source>
</evidence>
<feature type="chain" id="PRO_1000116265" description="Adenine phosphoribosyltransferase">
    <location>
        <begin position="1"/>
        <end position="181"/>
    </location>
</feature>
<dbReference type="EC" id="2.4.2.7" evidence="1"/>
<dbReference type="EMBL" id="FM954972">
    <property type="protein sequence ID" value="CAV17926.1"/>
    <property type="molecule type" value="Genomic_DNA"/>
</dbReference>
<dbReference type="SMR" id="B7VL95"/>
<dbReference type="STRING" id="575788.VS_0914"/>
<dbReference type="KEGG" id="vsp:VS_0914"/>
<dbReference type="eggNOG" id="COG0503">
    <property type="taxonomic scope" value="Bacteria"/>
</dbReference>
<dbReference type="HOGENOM" id="CLU_063339_3_0_6"/>
<dbReference type="UniPathway" id="UPA00588">
    <property type="reaction ID" value="UER00646"/>
</dbReference>
<dbReference type="Proteomes" id="UP000009100">
    <property type="component" value="Chromosome 1"/>
</dbReference>
<dbReference type="GO" id="GO:0005737">
    <property type="term" value="C:cytoplasm"/>
    <property type="evidence" value="ECO:0007669"/>
    <property type="project" value="UniProtKB-SubCell"/>
</dbReference>
<dbReference type="GO" id="GO:0002055">
    <property type="term" value="F:adenine binding"/>
    <property type="evidence" value="ECO:0007669"/>
    <property type="project" value="TreeGrafter"/>
</dbReference>
<dbReference type="GO" id="GO:0003999">
    <property type="term" value="F:adenine phosphoribosyltransferase activity"/>
    <property type="evidence" value="ECO:0007669"/>
    <property type="project" value="UniProtKB-UniRule"/>
</dbReference>
<dbReference type="GO" id="GO:0016208">
    <property type="term" value="F:AMP binding"/>
    <property type="evidence" value="ECO:0007669"/>
    <property type="project" value="TreeGrafter"/>
</dbReference>
<dbReference type="GO" id="GO:0006168">
    <property type="term" value="P:adenine salvage"/>
    <property type="evidence" value="ECO:0007669"/>
    <property type="project" value="InterPro"/>
</dbReference>
<dbReference type="GO" id="GO:0044209">
    <property type="term" value="P:AMP salvage"/>
    <property type="evidence" value="ECO:0007669"/>
    <property type="project" value="UniProtKB-UniRule"/>
</dbReference>
<dbReference type="GO" id="GO:0006166">
    <property type="term" value="P:purine ribonucleoside salvage"/>
    <property type="evidence" value="ECO:0007669"/>
    <property type="project" value="UniProtKB-KW"/>
</dbReference>
<dbReference type="CDD" id="cd06223">
    <property type="entry name" value="PRTases_typeI"/>
    <property type="match status" value="1"/>
</dbReference>
<dbReference type="FunFam" id="3.40.50.2020:FF:000004">
    <property type="entry name" value="Adenine phosphoribosyltransferase"/>
    <property type="match status" value="1"/>
</dbReference>
<dbReference type="Gene3D" id="3.40.50.2020">
    <property type="match status" value="1"/>
</dbReference>
<dbReference type="HAMAP" id="MF_00004">
    <property type="entry name" value="Aden_phosphoribosyltr"/>
    <property type="match status" value="1"/>
</dbReference>
<dbReference type="InterPro" id="IPR005764">
    <property type="entry name" value="Ade_phspho_trans"/>
</dbReference>
<dbReference type="InterPro" id="IPR000836">
    <property type="entry name" value="PRibTrfase_dom"/>
</dbReference>
<dbReference type="InterPro" id="IPR029057">
    <property type="entry name" value="PRTase-like"/>
</dbReference>
<dbReference type="InterPro" id="IPR050054">
    <property type="entry name" value="UPRTase/APRTase"/>
</dbReference>
<dbReference type="NCBIfam" id="TIGR01090">
    <property type="entry name" value="apt"/>
    <property type="match status" value="1"/>
</dbReference>
<dbReference type="NCBIfam" id="NF002632">
    <property type="entry name" value="PRK02304.1-1"/>
    <property type="match status" value="1"/>
</dbReference>
<dbReference type="NCBIfam" id="NF002634">
    <property type="entry name" value="PRK02304.1-3"/>
    <property type="match status" value="1"/>
</dbReference>
<dbReference type="NCBIfam" id="NF002636">
    <property type="entry name" value="PRK02304.1-5"/>
    <property type="match status" value="1"/>
</dbReference>
<dbReference type="PANTHER" id="PTHR32315">
    <property type="entry name" value="ADENINE PHOSPHORIBOSYLTRANSFERASE"/>
    <property type="match status" value="1"/>
</dbReference>
<dbReference type="PANTHER" id="PTHR32315:SF3">
    <property type="entry name" value="ADENINE PHOSPHORIBOSYLTRANSFERASE"/>
    <property type="match status" value="1"/>
</dbReference>
<dbReference type="Pfam" id="PF00156">
    <property type="entry name" value="Pribosyltran"/>
    <property type="match status" value="1"/>
</dbReference>
<dbReference type="SUPFAM" id="SSF53271">
    <property type="entry name" value="PRTase-like"/>
    <property type="match status" value="1"/>
</dbReference>
<dbReference type="PROSITE" id="PS00103">
    <property type="entry name" value="PUR_PYR_PR_TRANSFER"/>
    <property type="match status" value="1"/>
</dbReference>
<reference key="1">
    <citation type="submission" date="2009-02" db="EMBL/GenBank/DDBJ databases">
        <title>Vibrio splendidus str. LGP32 complete genome.</title>
        <authorList>
            <person name="Mazel D."/>
            <person name="Le Roux F."/>
        </authorList>
    </citation>
    <scope>NUCLEOTIDE SEQUENCE [LARGE SCALE GENOMIC DNA]</scope>
    <source>
        <strain>LGP32</strain>
    </source>
</reference>
<organism>
    <name type="scientific">Vibrio atlanticus (strain LGP32)</name>
    <name type="common">Vibrio splendidus (strain Mel32)</name>
    <dbReference type="NCBI Taxonomy" id="575788"/>
    <lineage>
        <taxon>Bacteria</taxon>
        <taxon>Pseudomonadati</taxon>
        <taxon>Pseudomonadota</taxon>
        <taxon>Gammaproteobacteria</taxon>
        <taxon>Vibrionales</taxon>
        <taxon>Vibrionaceae</taxon>
        <taxon>Vibrio</taxon>
    </lineage>
</organism>
<proteinExistence type="inferred from homology"/>
<sequence>MNTEKISLIKASIKSIPDYPKAGILFRDVTSLMEDPAAYKATIDLLVDTYKGMGFTKIVGTEARGFLFGAPLALELGVGFIPVRKPGKLPRQTVAQSYELEYGTDTLEIHTDAIVEGDKVLMVDDLLATGGTIEATTKLIRQLGGVVEHAAFVINLPEIGGDKRLQGLGLEVFSICEFDGH</sequence>
<name>APT_VIBA3</name>
<protein>
    <recommendedName>
        <fullName evidence="1">Adenine phosphoribosyltransferase</fullName>
        <shortName evidence="1">APRT</shortName>
        <ecNumber evidence="1">2.4.2.7</ecNumber>
    </recommendedName>
</protein>